<dbReference type="EC" id="4.2.3.3" evidence="1"/>
<dbReference type="EMBL" id="CP000002">
    <property type="protein sequence ID" value="AAU23909.1"/>
    <property type="molecule type" value="Genomic_DNA"/>
</dbReference>
<dbReference type="EMBL" id="AE017333">
    <property type="protein sequence ID" value="AAU41263.1"/>
    <property type="molecule type" value="Genomic_DNA"/>
</dbReference>
<dbReference type="RefSeq" id="WP_003182935.1">
    <property type="nucleotide sequence ID" value="NC_006322.1"/>
</dbReference>
<dbReference type="SMR" id="Q65I51"/>
<dbReference type="STRING" id="279010.BL02757"/>
<dbReference type="GeneID" id="92861018"/>
<dbReference type="KEGG" id="bld:BLi02383"/>
<dbReference type="KEGG" id="bli:BL02757"/>
<dbReference type="eggNOG" id="COG1803">
    <property type="taxonomic scope" value="Bacteria"/>
</dbReference>
<dbReference type="HOGENOM" id="CLU_120420_1_0_9"/>
<dbReference type="Proteomes" id="UP000000606">
    <property type="component" value="Chromosome"/>
</dbReference>
<dbReference type="Bgee" id="BL02757">
    <property type="expression patterns" value="Expressed in gastrula and 12 other cell types or tissues"/>
</dbReference>
<dbReference type="GO" id="GO:0005829">
    <property type="term" value="C:cytosol"/>
    <property type="evidence" value="ECO:0007669"/>
    <property type="project" value="TreeGrafter"/>
</dbReference>
<dbReference type="GO" id="GO:0008929">
    <property type="term" value="F:methylglyoxal synthase activity"/>
    <property type="evidence" value="ECO:0007669"/>
    <property type="project" value="UniProtKB-UniRule"/>
</dbReference>
<dbReference type="GO" id="GO:0019242">
    <property type="term" value="P:methylglyoxal biosynthetic process"/>
    <property type="evidence" value="ECO:0007669"/>
    <property type="project" value="UniProtKB-UniRule"/>
</dbReference>
<dbReference type="CDD" id="cd01422">
    <property type="entry name" value="MGS"/>
    <property type="match status" value="1"/>
</dbReference>
<dbReference type="FunFam" id="3.40.50.1380:FF:000006">
    <property type="entry name" value="Methylglyoxal synthase"/>
    <property type="match status" value="1"/>
</dbReference>
<dbReference type="Gene3D" id="3.40.50.1380">
    <property type="entry name" value="Methylglyoxal synthase-like domain"/>
    <property type="match status" value="1"/>
</dbReference>
<dbReference type="HAMAP" id="MF_00549">
    <property type="entry name" value="Methylglyoxal_synth"/>
    <property type="match status" value="1"/>
</dbReference>
<dbReference type="InterPro" id="IPR004363">
    <property type="entry name" value="Methylgl_synth"/>
</dbReference>
<dbReference type="InterPro" id="IPR018148">
    <property type="entry name" value="Methylglyoxal_synth_AS"/>
</dbReference>
<dbReference type="InterPro" id="IPR011607">
    <property type="entry name" value="MGS-like_dom"/>
</dbReference>
<dbReference type="InterPro" id="IPR036914">
    <property type="entry name" value="MGS-like_dom_sf"/>
</dbReference>
<dbReference type="NCBIfam" id="TIGR00160">
    <property type="entry name" value="MGSA"/>
    <property type="match status" value="1"/>
</dbReference>
<dbReference type="NCBIfam" id="NF003559">
    <property type="entry name" value="PRK05234.1"/>
    <property type="match status" value="1"/>
</dbReference>
<dbReference type="PANTHER" id="PTHR30492">
    <property type="entry name" value="METHYLGLYOXAL SYNTHASE"/>
    <property type="match status" value="1"/>
</dbReference>
<dbReference type="PANTHER" id="PTHR30492:SF0">
    <property type="entry name" value="METHYLGLYOXAL SYNTHASE"/>
    <property type="match status" value="1"/>
</dbReference>
<dbReference type="Pfam" id="PF02142">
    <property type="entry name" value="MGS"/>
    <property type="match status" value="1"/>
</dbReference>
<dbReference type="PIRSF" id="PIRSF006614">
    <property type="entry name" value="Methylglyox_syn"/>
    <property type="match status" value="1"/>
</dbReference>
<dbReference type="SMART" id="SM00851">
    <property type="entry name" value="MGS"/>
    <property type="match status" value="1"/>
</dbReference>
<dbReference type="SUPFAM" id="SSF52335">
    <property type="entry name" value="Methylglyoxal synthase-like"/>
    <property type="match status" value="1"/>
</dbReference>
<dbReference type="PROSITE" id="PS01335">
    <property type="entry name" value="METHYLGLYOXAL_SYNTH"/>
    <property type="match status" value="1"/>
</dbReference>
<dbReference type="PROSITE" id="PS51855">
    <property type="entry name" value="MGS"/>
    <property type="match status" value="1"/>
</dbReference>
<protein>
    <recommendedName>
        <fullName evidence="1">Methylglyoxal synthase</fullName>
        <shortName evidence="1">MGS</shortName>
        <ecNumber evidence="1">4.2.3.3</ecNumber>
    </recommendedName>
</protein>
<proteinExistence type="inferred from homology"/>
<gene>
    <name evidence="1" type="primary">mgsA</name>
    <name type="ordered locus">BLi02383</name>
    <name type="ordered locus">BL02757</name>
</gene>
<comment type="function">
    <text evidence="1">Catalyzes the formation of methylglyoxal from dihydroxyacetone phosphate.</text>
</comment>
<comment type="catalytic activity">
    <reaction evidence="1">
        <text>dihydroxyacetone phosphate = methylglyoxal + phosphate</text>
        <dbReference type="Rhea" id="RHEA:17937"/>
        <dbReference type="ChEBI" id="CHEBI:17158"/>
        <dbReference type="ChEBI" id="CHEBI:43474"/>
        <dbReference type="ChEBI" id="CHEBI:57642"/>
        <dbReference type="EC" id="4.2.3.3"/>
    </reaction>
</comment>
<comment type="similarity">
    <text evidence="1">Belongs to the methylglyoxal synthase family.</text>
</comment>
<feature type="chain" id="PRO_1000017785" description="Methylglyoxal synthase">
    <location>
        <begin position="1"/>
        <end position="137"/>
    </location>
</feature>
<feature type="domain" description="MGS-like" evidence="1">
    <location>
        <begin position="1"/>
        <end position="137"/>
    </location>
</feature>
<feature type="active site" description="Proton donor/acceptor" evidence="1">
    <location>
        <position position="60"/>
    </location>
</feature>
<feature type="binding site" evidence="1">
    <location>
        <position position="8"/>
    </location>
    <ligand>
        <name>substrate</name>
    </ligand>
</feature>
<feature type="binding site" evidence="1">
    <location>
        <position position="12"/>
    </location>
    <ligand>
        <name>substrate</name>
    </ligand>
</feature>
<feature type="binding site" evidence="1">
    <location>
        <begin position="34"/>
        <end position="37"/>
    </location>
    <ligand>
        <name>substrate</name>
    </ligand>
</feature>
<feature type="binding site" evidence="1">
    <location>
        <begin position="54"/>
        <end position="55"/>
    </location>
    <ligand>
        <name>substrate</name>
    </ligand>
</feature>
<feature type="binding site" evidence="1">
    <location>
        <position position="87"/>
    </location>
    <ligand>
        <name>substrate</name>
    </ligand>
</feature>
<sequence>MKIALIAHDRKKQDMIQLTTAYKDILKKHELFATGTTGLKITEATGLPVVRFQSGPLGGDQQIGALIAKNDIDLVIFLRDPLTAQPHEPDVSALIRLSDVYAIPLATNMGTAEILIRSVEEGAFEFRNIVHGRDRDA</sequence>
<keyword id="KW-0456">Lyase</keyword>
<keyword id="KW-1185">Reference proteome</keyword>
<accession>Q65I51</accession>
<accession>Q62TK0</accession>
<name>MGSA_BACLD</name>
<evidence type="ECO:0000255" key="1">
    <source>
        <dbReference type="HAMAP-Rule" id="MF_00549"/>
    </source>
</evidence>
<reference key="1">
    <citation type="journal article" date="2004" name="J. Mol. Microbiol. Biotechnol.">
        <title>The complete genome sequence of Bacillus licheniformis DSM13, an organism with great industrial potential.</title>
        <authorList>
            <person name="Veith B."/>
            <person name="Herzberg C."/>
            <person name="Steckel S."/>
            <person name="Feesche J."/>
            <person name="Maurer K.H."/>
            <person name="Ehrenreich P."/>
            <person name="Baeumer S."/>
            <person name="Henne A."/>
            <person name="Liesegang H."/>
            <person name="Merkl R."/>
            <person name="Ehrenreich A."/>
            <person name="Gottschalk G."/>
        </authorList>
    </citation>
    <scope>NUCLEOTIDE SEQUENCE [LARGE SCALE GENOMIC DNA]</scope>
    <source>
        <strain>ATCC 14580 / DSM 13 / JCM 2505 / CCUG 7422 / NBRC 12200 / NCIMB 9375 / NCTC 10341 / NRRL NRS-1264 / Gibson 46</strain>
    </source>
</reference>
<reference key="2">
    <citation type="journal article" date="2004" name="Genome Biol.">
        <title>Complete genome sequence of the industrial bacterium Bacillus licheniformis and comparisons with closely related Bacillus species.</title>
        <authorList>
            <person name="Rey M.W."/>
            <person name="Ramaiya P."/>
            <person name="Nelson B.A."/>
            <person name="Brody-Karpin S.D."/>
            <person name="Zaretsky E.J."/>
            <person name="Tang M."/>
            <person name="Lopez de Leon A."/>
            <person name="Xiang H."/>
            <person name="Gusti V."/>
            <person name="Clausen I.G."/>
            <person name="Olsen P.B."/>
            <person name="Rasmussen M.D."/>
            <person name="Andersen J.T."/>
            <person name="Joergensen P.L."/>
            <person name="Larsen T.S."/>
            <person name="Sorokin A."/>
            <person name="Bolotin A."/>
            <person name="Lapidus A."/>
            <person name="Galleron N."/>
            <person name="Ehrlich S.D."/>
            <person name="Berka R.M."/>
        </authorList>
    </citation>
    <scope>NUCLEOTIDE SEQUENCE [LARGE SCALE GENOMIC DNA]</scope>
    <source>
        <strain>ATCC 14580 / DSM 13 / JCM 2505 / CCUG 7422 / NBRC 12200 / NCIMB 9375 / NCTC 10341 / NRRL NRS-1264 / Gibson 46</strain>
    </source>
</reference>
<organism>
    <name type="scientific">Bacillus licheniformis (strain ATCC 14580 / DSM 13 / JCM 2505 / CCUG 7422 / NBRC 12200 / NCIMB 9375 / NCTC 10341 / NRRL NRS-1264 / Gibson 46)</name>
    <dbReference type="NCBI Taxonomy" id="279010"/>
    <lineage>
        <taxon>Bacteria</taxon>
        <taxon>Bacillati</taxon>
        <taxon>Bacillota</taxon>
        <taxon>Bacilli</taxon>
        <taxon>Bacillales</taxon>
        <taxon>Bacillaceae</taxon>
        <taxon>Bacillus</taxon>
    </lineage>
</organism>